<accession>Q5UQG3</accession>
<proteinExistence type="inferred from homology"/>
<feature type="chain" id="PRO_0000186360" description="Bifunctional dihydrofolate reductase-thymidylate synthase">
    <location>
        <begin position="1"/>
        <end position="563"/>
    </location>
</feature>
<feature type="domain" description="DHFR">
    <location>
        <begin position="3"/>
        <end position="195"/>
    </location>
</feature>
<feature type="region of interest" description="Thymidylate synthase" evidence="1">
    <location>
        <begin position="275"/>
        <end position="563"/>
    </location>
</feature>
<feature type="active site" evidence="1">
    <location>
        <position position="435"/>
    </location>
</feature>
<feature type="binding site" evidence="1">
    <location>
        <begin position="117"/>
        <end position="124"/>
    </location>
    <ligand>
        <name>NADP(+)</name>
        <dbReference type="ChEBI" id="CHEBI:58349"/>
    </ligand>
</feature>
<feature type="binding site" evidence="1">
    <location>
        <position position="292"/>
    </location>
    <ligand>
        <name>dUMP</name>
        <dbReference type="ChEBI" id="CHEBI:246422"/>
    </ligand>
</feature>
<feature type="binding site" evidence="1">
    <location>
        <position position="436"/>
    </location>
    <ligand>
        <name>dUMP</name>
        <dbReference type="ChEBI" id="CHEBI:246422"/>
    </ligand>
</feature>
<feature type="binding site" evidence="1">
    <location>
        <begin position="464"/>
        <end position="468"/>
    </location>
    <ligand>
        <name>dUMP</name>
        <dbReference type="ChEBI" id="CHEBI:246422"/>
    </ligand>
</feature>
<feature type="binding site" evidence="1">
    <location>
        <position position="474"/>
    </location>
    <ligand>
        <name>dUMP</name>
        <dbReference type="ChEBI" id="CHEBI:246422"/>
    </ligand>
</feature>
<feature type="binding site" evidence="1">
    <location>
        <begin position="504"/>
        <end position="506"/>
    </location>
    <ligand>
        <name>dUMP</name>
        <dbReference type="ChEBI" id="CHEBI:246422"/>
    </ligand>
</feature>
<reference key="1">
    <citation type="journal article" date="2004" name="Science">
        <title>The 1.2-megabase genome sequence of Mimivirus.</title>
        <authorList>
            <person name="Raoult D."/>
            <person name="Audic S."/>
            <person name="Robert C."/>
            <person name="Abergel C."/>
            <person name="Renesto P."/>
            <person name="Ogata H."/>
            <person name="La Scola B."/>
            <person name="Susan M."/>
            <person name="Claverie J.-M."/>
        </authorList>
    </citation>
    <scope>NUCLEOTIDE SEQUENCE [LARGE SCALE GENOMIC DNA]</scope>
    <source>
        <strain>Rowbotham-Bradford</strain>
    </source>
</reference>
<name>DRTS_MIMIV</name>
<evidence type="ECO:0000250" key="1"/>
<evidence type="ECO:0000305" key="2"/>
<gene>
    <name type="ordered locus">MIMI_R497</name>
</gene>
<protein>
    <recommendedName>
        <fullName>Bifunctional dihydrofolate reductase-thymidylate synthase</fullName>
        <shortName>DHFR-TS</shortName>
    </recommendedName>
    <domain>
        <recommendedName>
            <fullName>Dihydrofolate reductase</fullName>
            <ecNumber>1.5.1.3</ecNumber>
        </recommendedName>
    </domain>
    <domain>
        <recommendedName>
            <fullName>Thymidylate synthase</fullName>
            <ecNumber>2.1.1.45</ecNumber>
        </recommendedName>
    </domain>
</protein>
<comment type="function">
    <text evidence="1">Bifunctional enzyme. Involved in de novo dTMP biosynthesis. Key enzyme in folate metabolism. Catalyzes an essential reaction for de novo glycine and purine synthesis, DNA precursor synthesis, and for the conversion of dUMP to dTMP (By similarity).</text>
</comment>
<comment type="catalytic activity">
    <reaction>
        <text>(6S)-5,6,7,8-tetrahydrofolate + NADP(+) = 7,8-dihydrofolate + NADPH + H(+)</text>
        <dbReference type="Rhea" id="RHEA:15009"/>
        <dbReference type="ChEBI" id="CHEBI:15378"/>
        <dbReference type="ChEBI" id="CHEBI:57451"/>
        <dbReference type="ChEBI" id="CHEBI:57453"/>
        <dbReference type="ChEBI" id="CHEBI:57783"/>
        <dbReference type="ChEBI" id="CHEBI:58349"/>
        <dbReference type="EC" id="1.5.1.3"/>
    </reaction>
</comment>
<comment type="catalytic activity">
    <reaction>
        <text>dUMP + (6R)-5,10-methylene-5,6,7,8-tetrahydrofolate = 7,8-dihydrofolate + dTMP</text>
        <dbReference type="Rhea" id="RHEA:12104"/>
        <dbReference type="ChEBI" id="CHEBI:15636"/>
        <dbReference type="ChEBI" id="CHEBI:57451"/>
        <dbReference type="ChEBI" id="CHEBI:63528"/>
        <dbReference type="ChEBI" id="CHEBI:246422"/>
        <dbReference type="EC" id="2.1.1.45"/>
    </reaction>
</comment>
<comment type="pathway">
    <text>Cofactor biosynthesis; tetrahydrofolate biosynthesis; 5,6,7,8-tetrahydrofolate from 7,8-dihydrofolate: step 1/1.</text>
</comment>
<comment type="similarity">
    <text evidence="2">In the N-terminal section; belongs to the dihydrofolate reductase family.</text>
</comment>
<comment type="similarity">
    <text evidence="2">In the C-terminal section; belongs to the thymidylate synthase family.</text>
</comment>
<keyword id="KW-0489">Methyltransferase</keyword>
<keyword id="KW-0511">Multifunctional enzyme</keyword>
<keyword id="KW-0521">NADP</keyword>
<keyword id="KW-0545">Nucleotide biosynthesis</keyword>
<keyword id="KW-0554">One-carbon metabolism</keyword>
<keyword id="KW-0560">Oxidoreductase</keyword>
<keyword id="KW-1185">Reference proteome</keyword>
<keyword id="KW-0808">Transferase</keyword>
<dbReference type="EC" id="1.5.1.3"/>
<dbReference type="EC" id="2.1.1.45"/>
<dbReference type="EMBL" id="AY653733">
    <property type="protein sequence ID" value="AAV50762.1"/>
    <property type="molecule type" value="Genomic_DNA"/>
</dbReference>
<dbReference type="SMR" id="Q5UQG3"/>
<dbReference type="KEGG" id="vg:9925127"/>
<dbReference type="OrthoDB" id="13491at10239"/>
<dbReference type="UniPathway" id="UPA00077">
    <property type="reaction ID" value="UER00158"/>
</dbReference>
<dbReference type="Proteomes" id="UP000001134">
    <property type="component" value="Genome"/>
</dbReference>
<dbReference type="GO" id="GO:0004146">
    <property type="term" value="F:dihydrofolate reductase activity"/>
    <property type="evidence" value="ECO:0007669"/>
    <property type="project" value="UniProtKB-EC"/>
</dbReference>
<dbReference type="GO" id="GO:0004799">
    <property type="term" value="F:thymidylate synthase activity"/>
    <property type="evidence" value="ECO:0007669"/>
    <property type="project" value="UniProtKB-EC"/>
</dbReference>
<dbReference type="GO" id="GO:0006231">
    <property type="term" value="P:dTMP biosynthetic process"/>
    <property type="evidence" value="ECO:0007669"/>
    <property type="project" value="InterPro"/>
</dbReference>
<dbReference type="GO" id="GO:0032259">
    <property type="term" value="P:methylation"/>
    <property type="evidence" value="ECO:0007669"/>
    <property type="project" value="UniProtKB-KW"/>
</dbReference>
<dbReference type="GO" id="GO:0006730">
    <property type="term" value="P:one-carbon metabolic process"/>
    <property type="evidence" value="ECO:0007669"/>
    <property type="project" value="UniProtKB-KW"/>
</dbReference>
<dbReference type="GO" id="GO:0046654">
    <property type="term" value="P:tetrahydrofolate biosynthetic process"/>
    <property type="evidence" value="ECO:0007669"/>
    <property type="project" value="UniProtKB-UniPathway"/>
</dbReference>
<dbReference type="CDD" id="cd00209">
    <property type="entry name" value="DHFR"/>
    <property type="match status" value="1"/>
</dbReference>
<dbReference type="CDD" id="cd00351">
    <property type="entry name" value="TS_Pyrimidine_HMase"/>
    <property type="match status" value="1"/>
</dbReference>
<dbReference type="Gene3D" id="3.40.430.10">
    <property type="entry name" value="Dihydrofolate Reductase, subunit A"/>
    <property type="match status" value="1"/>
</dbReference>
<dbReference type="Gene3D" id="3.30.572.10">
    <property type="entry name" value="Thymidylate synthase/dCMP hydroxymethylase domain"/>
    <property type="match status" value="1"/>
</dbReference>
<dbReference type="HAMAP" id="MF_00008">
    <property type="entry name" value="Thymidy_synth_bact"/>
    <property type="match status" value="1"/>
</dbReference>
<dbReference type="InterPro" id="IPR024072">
    <property type="entry name" value="DHFR-like_dom_sf"/>
</dbReference>
<dbReference type="InterPro" id="IPR001796">
    <property type="entry name" value="DHFR_dom"/>
</dbReference>
<dbReference type="InterPro" id="IPR045097">
    <property type="entry name" value="Thymidate_synth/dCMP_Mease"/>
</dbReference>
<dbReference type="InterPro" id="IPR023451">
    <property type="entry name" value="Thymidate_synth/dCMP_Mease_dom"/>
</dbReference>
<dbReference type="InterPro" id="IPR036926">
    <property type="entry name" value="Thymidate_synth/dCMP_Mease_sf"/>
</dbReference>
<dbReference type="InterPro" id="IPR000398">
    <property type="entry name" value="Thymidylate_synthase"/>
</dbReference>
<dbReference type="InterPro" id="IPR020940">
    <property type="entry name" value="Thymidylate_synthase_AS"/>
</dbReference>
<dbReference type="NCBIfam" id="TIGR03284">
    <property type="entry name" value="thym_sym"/>
    <property type="match status" value="1"/>
</dbReference>
<dbReference type="PANTHER" id="PTHR11548:SF2">
    <property type="entry name" value="THYMIDYLATE SYNTHASE"/>
    <property type="match status" value="1"/>
</dbReference>
<dbReference type="PANTHER" id="PTHR11548">
    <property type="entry name" value="THYMIDYLATE SYNTHASE 1"/>
    <property type="match status" value="1"/>
</dbReference>
<dbReference type="Pfam" id="PF00186">
    <property type="entry name" value="DHFR_1"/>
    <property type="match status" value="1"/>
</dbReference>
<dbReference type="Pfam" id="PF00303">
    <property type="entry name" value="Thymidylat_synt"/>
    <property type="match status" value="1"/>
</dbReference>
<dbReference type="PRINTS" id="PR00108">
    <property type="entry name" value="THYMDSNTHASE"/>
</dbReference>
<dbReference type="SUPFAM" id="SSF53597">
    <property type="entry name" value="Dihydrofolate reductase-like"/>
    <property type="match status" value="1"/>
</dbReference>
<dbReference type="SUPFAM" id="SSF55831">
    <property type="entry name" value="Thymidylate synthase/dCMP hydroxymethylase"/>
    <property type="match status" value="1"/>
</dbReference>
<dbReference type="PROSITE" id="PS51330">
    <property type="entry name" value="DHFR_2"/>
    <property type="match status" value="1"/>
</dbReference>
<dbReference type="PROSITE" id="PS00091">
    <property type="entry name" value="THYMIDYLATE_SYNTHASE"/>
    <property type="match status" value="1"/>
</dbReference>
<sequence length="563" mass="65063">MKKFNIIAAINNDSIIGVKEYGTFSMPWPYLKDDMNHFRKITTDTGSIESGVNAIIVGFNTWQTLPSSYRNIRSRFNIVISRDDETDGQFHKYVKTFDEAIEFASSLTNLNEIFVIGGGVIYDLALKHKLLDKLYLTHVGSNYPIDDNVEKVVHFPLTWSKIEKMCDSNFLELDSEISKHDIGKNILLRFQEYSVKKELYWAIEYLKKNTSLDNKGIIGDKGATGSKGYSLEQHDYYSTEYFWNFYEFITRKVFDLFNSSNEISIPSEECPENQYIELVKTIMEKGIVKQTRNSITKSIFGYQLKYDLSKGYPIQTIKRSYPKAIFEELMWMIRGQTDVSILQKKGVHVWDKNSSKDFLSKYNLPYEEGDIGPGYGFQMRYWGAEYTDCKTSYQGQGIDQLNKCIESIQNNPHDRRIMINLWNCSDLDKMALAPCHFCYMFGVDLYEVPTTSGKKGRLNCHLVQRSWDVLLGWNTTTAALLTYLIANHCDLDPGILVHSISDAHIYQSHIDSGAISQLLQRKCRKFPNLVIRNKKEKIDDYEFDDLIIENYYPCPSISAEMIA</sequence>
<organism>
    <name type="scientific">Acanthamoeba polyphaga mimivirus</name>
    <name type="common">APMV</name>
    <dbReference type="NCBI Taxonomy" id="212035"/>
    <lineage>
        <taxon>Viruses</taxon>
        <taxon>Varidnaviria</taxon>
        <taxon>Bamfordvirae</taxon>
        <taxon>Nucleocytoviricota</taxon>
        <taxon>Megaviricetes</taxon>
        <taxon>Imitervirales</taxon>
        <taxon>Mimiviridae</taxon>
        <taxon>Megamimivirinae</taxon>
        <taxon>Mimivirus</taxon>
        <taxon>Mimivirus bradfordmassiliense</taxon>
    </lineage>
</organism>
<organismHost>
    <name type="scientific">Acanthamoeba polyphaga</name>
    <name type="common">Amoeba</name>
    <dbReference type="NCBI Taxonomy" id="5757"/>
</organismHost>